<accession>P05563</accession>
<feature type="chain" id="PRO_0000073178" description="Ovomucoid">
    <location>
        <begin position="1" status="less than"/>
        <end position="54" status="greater than"/>
    </location>
</feature>
<feature type="domain" description="Kazal-like" evidence="1">
    <location>
        <begin position="4"/>
        <end position="54"/>
    </location>
</feature>
<feature type="site" description="Reactive bond 3">
    <location>
        <begin position="16"/>
        <end position="17"/>
    </location>
</feature>
<feature type="glycosylation site" description="N-linked (GlcNAc...) asparagine">
    <location>
        <position position="43"/>
    </location>
</feature>
<feature type="disulfide bond">
    <location>
        <begin position="6"/>
        <end position="36"/>
    </location>
</feature>
<feature type="disulfide bond">
    <location>
        <begin position="14"/>
        <end position="33"/>
    </location>
</feature>
<feature type="disulfide bond">
    <location>
        <begin position="22"/>
        <end position="54"/>
    </location>
</feature>
<feature type="non-terminal residue">
    <location>
        <position position="1"/>
    </location>
</feature>
<feature type="non-terminal residue">
    <location>
        <position position="54"/>
    </location>
</feature>
<organism>
    <name type="scientific">Spheniscus humboldti</name>
    <name type="common">Humboldt penguin</name>
    <dbReference type="NCBI Taxonomy" id="9240"/>
    <lineage>
        <taxon>Eukaryota</taxon>
        <taxon>Metazoa</taxon>
        <taxon>Chordata</taxon>
        <taxon>Craniata</taxon>
        <taxon>Vertebrata</taxon>
        <taxon>Euteleostomi</taxon>
        <taxon>Archelosauria</taxon>
        <taxon>Archosauria</taxon>
        <taxon>Dinosauria</taxon>
        <taxon>Saurischia</taxon>
        <taxon>Theropoda</taxon>
        <taxon>Coelurosauria</taxon>
        <taxon>Aves</taxon>
        <taxon>Neognathae</taxon>
        <taxon>Neoaves</taxon>
        <taxon>Aequornithes</taxon>
        <taxon>Sphenisciformes</taxon>
        <taxon>Spheniscidae</taxon>
        <taxon>Spheniscus</taxon>
    </lineage>
</organism>
<comment type="subcellular location">
    <subcellularLocation>
        <location>Secreted</location>
    </subcellularLocation>
</comment>
<comment type="domain">
    <text>Avian ovomucoid consists of three homologous, tandem Kazal family inhibitory domains.</text>
</comment>
<protein>
    <recommendedName>
        <fullName>Ovomucoid</fullName>
    </recommendedName>
</protein>
<name>IOVO_SPHHU</name>
<proteinExistence type="evidence at protein level"/>
<evidence type="ECO:0000255" key="1">
    <source>
        <dbReference type="PROSITE-ProRule" id="PRU00798"/>
    </source>
</evidence>
<keyword id="KW-0903">Direct protein sequencing</keyword>
<keyword id="KW-1015">Disulfide bond</keyword>
<keyword id="KW-0325">Glycoprotein</keyword>
<keyword id="KW-0646">Protease inhibitor</keyword>
<keyword id="KW-0677">Repeat</keyword>
<keyword id="KW-0964">Secreted</keyword>
<keyword id="KW-0722">Serine protease inhibitor</keyword>
<reference key="1">
    <citation type="journal article" date="1987" name="Biochemistry">
        <title>Ovomucoid third domains from 100 avian species: isolation, sequences, and hypervariability of enzyme-inhibitor contact residues.</title>
        <authorList>
            <person name="Laskowski M. Jr."/>
            <person name="Kato I."/>
            <person name="Ardelt W."/>
            <person name="Cook J."/>
            <person name="Denton A."/>
            <person name="Empie M.W."/>
            <person name="Kohr W.J."/>
            <person name="Park S.J."/>
            <person name="Parks K."/>
            <person name="Schatzley B.L."/>
            <person name="Schoenberger O.L."/>
            <person name="Tashiro M."/>
            <person name="Vichot G."/>
            <person name="Whatley H.E."/>
            <person name="Wieczorek A."/>
            <person name="Wieczorek M."/>
        </authorList>
    </citation>
    <scope>PROTEIN SEQUENCE</scope>
</reference>
<sequence length="54" mass="5855">IATIDCSDYPKPVCSLEYMPLCGSDSKTYSNKCNFCNAVVDSNGTLILSHFGKC</sequence>
<dbReference type="PIR" id="H31441">
    <property type="entry name" value="H31441"/>
</dbReference>
<dbReference type="SMR" id="P05563"/>
<dbReference type="GO" id="GO:0005576">
    <property type="term" value="C:extracellular region"/>
    <property type="evidence" value="ECO:0007669"/>
    <property type="project" value="UniProtKB-SubCell"/>
</dbReference>
<dbReference type="GO" id="GO:0004867">
    <property type="term" value="F:serine-type endopeptidase inhibitor activity"/>
    <property type="evidence" value="ECO:0007669"/>
    <property type="project" value="UniProtKB-KW"/>
</dbReference>
<dbReference type="CDD" id="cd00104">
    <property type="entry name" value="KAZAL_FS"/>
    <property type="match status" value="1"/>
</dbReference>
<dbReference type="FunFam" id="3.30.60.30:FF:000037">
    <property type="entry name" value="Ovomucoid"/>
    <property type="match status" value="1"/>
</dbReference>
<dbReference type="Gene3D" id="3.30.60.30">
    <property type="match status" value="1"/>
</dbReference>
<dbReference type="InterPro" id="IPR051597">
    <property type="entry name" value="Bifunctional_prot_inhibitor"/>
</dbReference>
<dbReference type="InterPro" id="IPR002350">
    <property type="entry name" value="Kazal_dom"/>
</dbReference>
<dbReference type="InterPro" id="IPR036058">
    <property type="entry name" value="Kazal_dom_sf"/>
</dbReference>
<dbReference type="InterPro" id="IPR001239">
    <property type="entry name" value="Prot_inh_Kazal-m"/>
</dbReference>
<dbReference type="PANTHER" id="PTHR47729:SF1">
    <property type="entry name" value="OVOMUCOID-LIKE-RELATED"/>
    <property type="match status" value="1"/>
</dbReference>
<dbReference type="PANTHER" id="PTHR47729">
    <property type="entry name" value="SERINE PEPTIDASE INHIBITOR, KAZAL TYPE 2, TANDEM DUPLICATE 1-RELATED"/>
    <property type="match status" value="1"/>
</dbReference>
<dbReference type="Pfam" id="PF00050">
    <property type="entry name" value="Kazal_1"/>
    <property type="match status" value="1"/>
</dbReference>
<dbReference type="PRINTS" id="PR00290">
    <property type="entry name" value="KAZALINHBTR"/>
</dbReference>
<dbReference type="SMART" id="SM00280">
    <property type="entry name" value="KAZAL"/>
    <property type="match status" value="1"/>
</dbReference>
<dbReference type="SUPFAM" id="SSF100895">
    <property type="entry name" value="Kazal-type serine protease inhibitors"/>
    <property type="match status" value="1"/>
</dbReference>
<dbReference type="PROSITE" id="PS00282">
    <property type="entry name" value="KAZAL_1"/>
    <property type="match status" value="1"/>
</dbReference>
<dbReference type="PROSITE" id="PS51465">
    <property type="entry name" value="KAZAL_2"/>
    <property type="match status" value="1"/>
</dbReference>